<comment type="catalytic activity">
    <reaction evidence="1">
        <text>L-aspartate + NH4(+) + ATP = L-asparagine + AMP + diphosphate + H(+)</text>
        <dbReference type="Rhea" id="RHEA:11372"/>
        <dbReference type="ChEBI" id="CHEBI:15378"/>
        <dbReference type="ChEBI" id="CHEBI:28938"/>
        <dbReference type="ChEBI" id="CHEBI:29991"/>
        <dbReference type="ChEBI" id="CHEBI:30616"/>
        <dbReference type="ChEBI" id="CHEBI:33019"/>
        <dbReference type="ChEBI" id="CHEBI:58048"/>
        <dbReference type="ChEBI" id="CHEBI:456215"/>
        <dbReference type="EC" id="6.3.1.1"/>
    </reaction>
</comment>
<comment type="pathway">
    <text evidence="1">Amino-acid biosynthesis; L-asparagine biosynthesis; L-asparagine from L-aspartate (ammonia route): step 1/1.</text>
</comment>
<comment type="subcellular location">
    <subcellularLocation>
        <location evidence="1">Cytoplasm</location>
    </subcellularLocation>
</comment>
<comment type="similarity">
    <text evidence="1">Belongs to the class-II aminoacyl-tRNA synthetase family. AsnA subfamily.</text>
</comment>
<accession>B5XMB7</accession>
<proteinExistence type="inferred from homology"/>
<keyword id="KW-0028">Amino-acid biosynthesis</keyword>
<keyword id="KW-0061">Asparagine biosynthesis</keyword>
<keyword id="KW-0067">ATP-binding</keyword>
<keyword id="KW-0963">Cytoplasm</keyword>
<keyword id="KW-0436">Ligase</keyword>
<keyword id="KW-0547">Nucleotide-binding</keyword>
<reference key="1">
    <citation type="journal article" date="2008" name="J. Bacteriol.">
        <title>Genome sequence of a nephritogenic and highly transformable M49 strain of Streptococcus pyogenes.</title>
        <authorList>
            <person name="McShan W.M."/>
            <person name="Ferretti J.J."/>
            <person name="Karasawa T."/>
            <person name="Suvorov A.N."/>
            <person name="Lin S."/>
            <person name="Qin B."/>
            <person name="Jia H."/>
            <person name="Kenton S."/>
            <person name="Najar F."/>
            <person name="Wu H."/>
            <person name="Scott J."/>
            <person name="Roe B.A."/>
            <person name="Savic D.J."/>
        </authorList>
    </citation>
    <scope>NUCLEOTIDE SEQUENCE [LARGE SCALE GENOMIC DNA]</scope>
    <source>
        <strain>NZ131</strain>
    </source>
</reference>
<name>ASNA_STRPZ</name>
<evidence type="ECO:0000255" key="1">
    <source>
        <dbReference type="HAMAP-Rule" id="MF_00555"/>
    </source>
</evidence>
<organism>
    <name type="scientific">Streptococcus pyogenes serotype M49 (strain NZ131)</name>
    <dbReference type="NCBI Taxonomy" id="471876"/>
    <lineage>
        <taxon>Bacteria</taxon>
        <taxon>Bacillati</taxon>
        <taxon>Bacillota</taxon>
        <taxon>Bacilli</taxon>
        <taxon>Lactobacillales</taxon>
        <taxon>Streptococcaceae</taxon>
        <taxon>Streptococcus</taxon>
    </lineage>
</organism>
<dbReference type="EC" id="6.3.1.1" evidence="1"/>
<dbReference type="EMBL" id="CP000829">
    <property type="protein sequence ID" value="ACI61479.1"/>
    <property type="molecule type" value="Genomic_DNA"/>
</dbReference>
<dbReference type="SMR" id="B5XMB7"/>
<dbReference type="KEGG" id="soz:Spy49_1191c"/>
<dbReference type="HOGENOM" id="CLU_071543_0_0_9"/>
<dbReference type="UniPathway" id="UPA00134">
    <property type="reaction ID" value="UER00194"/>
</dbReference>
<dbReference type="Proteomes" id="UP000001039">
    <property type="component" value="Chromosome"/>
</dbReference>
<dbReference type="GO" id="GO:0005829">
    <property type="term" value="C:cytosol"/>
    <property type="evidence" value="ECO:0007669"/>
    <property type="project" value="TreeGrafter"/>
</dbReference>
<dbReference type="GO" id="GO:0004071">
    <property type="term" value="F:aspartate-ammonia ligase activity"/>
    <property type="evidence" value="ECO:0007669"/>
    <property type="project" value="UniProtKB-UniRule"/>
</dbReference>
<dbReference type="GO" id="GO:0005524">
    <property type="term" value="F:ATP binding"/>
    <property type="evidence" value="ECO:0007669"/>
    <property type="project" value="UniProtKB-UniRule"/>
</dbReference>
<dbReference type="GO" id="GO:0140096">
    <property type="term" value="F:catalytic activity, acting on a protein"/>
    <property type="evidence" value="ECO:0007669"/>
    <property type="project" value="UniProtKB-ARBA"/>
</dbReference>
<dbReference type="GO" id="GO:0016740">
    <property type="term" value="F:transferase activity"/>
    <property type="evidence" value="ECO:0007669"/>
    <property type="project" value="UniProtKB-ARBA"/>
</dbReference>
<dbReference type="GO" id="GO:0070981">
    <property type="term" value="P:L-asparagine biosynthetic process"/>
    <property type="evidence" value="ECO:0007669"/>
    <property type="project" value="UniProtKB-UniRule"/>
</dbReference>
<dbReference type="Gene3D" id="3.30.930.10">
    <property type="entry name" value="Bira Bifunctional Protein, Domain 2"/>
    <property type="match status" value="1"/>
</dbReference>
<dbReference type="HAMAP" id="MF_00555">
    <property type="entry name" value="AsnA"/>
    <property type="match status" value="1"/>
</dbReference>
<dbReference type="InterPro" id="IPR006195">
    <property type="entry name" value="aa-tRNA-synth_II"/>
</dbReference>
<dbReference type="InterPro" id="IPR045864">
    <property type="entry name" value="aa-tRNA-synth_II/BPL/LPL"/>
</dbReference>
<dbReference type="InterPro" id="IPR004618">
    <property type="entry name" value="AsnA"/>
</dbReference>
<dbReference type="NCBIfam" id="TIGR00669">
    <property type="entry name" value="asnA"/>
    <property type="match status" value="1"/>
</dbReference>
<dbReference type="PANTHER" id="PTHR30073">
    <property type="entry name" value="ASPARTATE--AMMONIA LIGASE"/>
    <property type="match status" value="1"/>
</dbReference>
<dbReference type="PANTHER" id="PTHR30073:SF5">
    <property type="entry name" value="ASPARTATE--AMMONIA LIGASE"/>
    <property type="match status" value="1"/>
</dbReference>
<dbReference type="Pfam" id="PF03590">
    <property type="entry name" value="AsnA"/>
    <property type="match status" value="1"/>
</dbReference>
<dbReference type="PIRSF" id="PIRSF001555">
    <property type="entry name" value="Asp_ammon_ligase"/>
    <property type="match status" value="1"/>
</dbReference>
<dbReference type="SUPFAM" id="SSF55681">
    <property type="entry name" value="Class II aaRS and biotin synthetases"/>
    <property type="match status" value="1"/>
</dbReference>
<dbReference type="PROSITE" id="PS50862">
    <property type="entry name" value="AA_TRNA_LIGASE_II"/>
    <property type="match status" value="1"/>
</dbReference>
<protein>
    <recommendedName>
        <fullName evidence="1">Aspartate--ammonia ligase</fullName>
        <ecNumber evidence="1">6.3.1.1</ecNumber>
    </recommendedName>
    <alternativeName>
        <fullName evidence="1">Asparagine synthetase A</fullName>
    </alternativeName>
</protein>
<feature type="chain" id="PRO_1000129135" description="Aspartate--ammonia ligase">
    <location>
        <begin position="1"/>
        <end position="330"/>
    </location>
</feature>
<gene>
    <name evidence="1" type="primary">asnA</name>
    <name type="ordered locus">Spy49_1191c</name>
</gene>
<sequence>MKKSFIHQQEEISFVKNTFTQYLIAKLDVVEVQGPILSRVGDGMQDNLSGTENPVSVNVLKIPNATFEVVHSLAKWKRHTLARFGFNEGEGLVVNMKALRPDEDSLDQTHSVYVDQWDWEKVIPDGKRNLAYLKEAVETIYKVIRLTELAVEARYDIEAVLPKKITFIHTEELVAKYPDLTPKERENAITKEFGAVFLIGIGGVLPDGKPHDGRAPDYDDWTTETENGYHGLNGDILVWNGQLGSAFELSSMGIRVDEEALKRQVEMTGDQDRLAFDWHKSLLNGLFPLTIGGGIGQSRMVMFLLRKQHIGEVQTSVWPQEVRDSYDNIL</sequence>